<protein>
    <recommendedName>
        <fullName>Phosducin-like protein 3</fullName>
    </recommendedName>
</protein>
<evidence type="ECO:0000305" key="1"/>
<name>PHLP3_DICDI</name>
<proteinExistence type="evidence at transcript level"/>
<reference key="1">
    <citation type="journal article" date="2003" name="EMBO J.">
        <title>Phosducin-like proteins in Dictyostelium discoideum: implications for the phosducin family of proteins.</title>
        <authorList>
            <person name="Blaauw M."/>
            <person name="Knol J.C."/>
            <person name="Kortholt A."/>
            <person name="Roelofs J."/>
            <person name="Ruchira X."/>
            <person name="Postma M."/>
            <person name="Visser A.J.W.G."/>
            <person name="van Haastert P.J.M."/>
        </authorList>
    </citation>
    <scope>NUCLEOTIDE SEQUENCE [MRNA]</scope>
    <scope>THIOREDOXIN FOLD REGION</scope>
</reference>
<reference key="2">
    <citation type="journal article" date="2005" name="Nature">
        <title>The genome of the social amoeba Dictyostelium discoideum.</title>
        <authorList>
            <person name="Eichinger L."/>
            <person name="Pachebat J.A."/>
            <person name="Gloeckner G."/>
            <person name="Rajandream M.A."/>
            <person name="Sucgang R."/>
            <person name="Berriman M."/>
            <person name="Song J."/>
            <person name="Olsen R."/>
            <person name="Szafranski K."/>
            <person name="Xu Q."/>
            <person name="Tunggal B."/>
            <person name="Kummerfeld S."/>
            <person name="Madera M."/>
            <person name="Konfortov B.A."/>
            <person name="Rivero F."/>
            <person name="Bankier A.T."/>
            <person name="Lehmann R."/>
            <person name="Hamlin N."/>
            <person name="Davies R."/>
            <person name="Gaudet P."/>
            <person name="Fey P."/>
            <person name="Pilcher K."/>
            <person name="Chen G."/>
            <person name="Saunders D."/>
            <person name="Sodergren E.J."/>
            <person name="Davis P."/>
            <person name="Kerhornou A."/>
            <person name="Nie X."/>
            <person name="Hall N."/>
            <person name="Anjard C."/>
            <person name="Hemphill L."/>
            <person name="Bason N."/>
            <person name="Farbrother P."/>
            <person name="Desany B."/>
            <person name="Just E."/>
            <person name="Morio T."/>
            <person name="Rost R."/>
            <person name="Churcher C.M."/>
            <person name="Cooper J."/>
            <person name="Haydock S."/>
            <person name="van Driessche N."/>
            <person name="Cronin A."/>
            <person name="Goodhead I."/>
            <person name="Muzny D.M."/>
            <person name="Mourier T."/>
            <person name="Pain A."/>
            <person name="Lu M."/>
            <person name="Harper D."/>
            <person name="Lindsay R."/>
            <person name="Hauser H."/>
            <person name="James K.D."/>
            <person name="Quiles M."/>
            <person name="Madan Babu M."/>
            <person name="Saito T."/>
            <person name="Buchrieser C."/>
            <person name="Wardroper A."/>
            <person name="Felder M."/>
            <person name="Thangavelu M."/>
            <person name="Johnson D."/>
            <person name="Knights A."/>
            <person name="Loulseged H."/>
            <person name="Mungall K.L."/>
            <person name="Oliver K."/>
            <person name="Price C."/>
            <person name="Quail M.A."/>
            <person name="Urushihara H."/>
            <person name="Hernandez J."/>
            <person name="Rabbinowitsch E."/>
            <person name="Steffen D."/>
            <person name="Sanders M."/>
            <person name="Ma J."/>
            <person name="Kohara Y."/>
            <person name="Sharp S."/>
            <person name="Simmonds M.N."/>
            <person name="Spiegler S."/>
            <person name="Tivey A."/>
            <person name="Sugano S."/>
            <person name="White B."/>
            <person name="Walker D."/>
            <person name="Woodward J.R."/>
            <person name="Winckler T."/>
            <person name="Tanaka Y."/>
            <person name="Shaulsky G."/>
            <person name="Schleicher M."/>
            <person name="Weinstock G.M."/>
            <person name="Rosenthal A."/>
            <person name="Cox E.C."/>
            <person name="Chisholm R.L."/>
            <person name="Gibbs R.A."/>
            <person name="Loomis W.F."/>
            <person name="Platzer M."/>
            <person name="Kay R.R."/>
            <person name="Williams J.G."/>
            <person name="Dear P.H."/>
            <person name="Noegel A.A."/>
            <person name="Barrell B.G."/>
            <person name="Kuspa A."/>
        </authorList>
    </citation>
    <scope>NUCLEOTIDE SEQUENCE [LARGE SCALE GENOMIC DNA]</scope>
    <source>
        <strain>AX4</strain>
    </source>
</reference>
<accession>Q71A37</accession>
<accession>Q54B66</accession>
<dbReference type="EMBL" id="AF540060">
    <property type="protein sequence ID" value="AAQ11194.1"/>
    <property type="molecule type" value="mRNA"/>
</dbReference>
<dbReference type="EMBL" id="AAFI02000223">
    <property type="protein sequence ID" value="EAL60495.1"/>
    <property type="molecule type" value="Genomic_DNA"/>
</dbReference>
<dbReference type="RefSeq" id="XP_628922.1">
    <property type="nucleotide sequence ID" value="XM_628920.1"/>
</dbReference>
<dbReference type="SMR" id="Q71A37"/>
<dbReference type="FunCoup" id="Q71A37">
    <property type="interactions" value="495"/>
</dbReference>
<dbReference type="STRING" id="44689.Q71A37"/>
<dbReference type="PaxDb" id="44689-DDB0201655"/>
<dbReference type="EnsemblProtists" id="EAL60495">
    <property type="protein sequence ID" value="EAL60495"/>
    <property type="gene ID" value="DDB_G0293848"/>
</dbReference>
<dbReference type="GeneID" id="8629464"/>
<dbReference type="KEGG" id="ddi:DDB_G0293848"/>
<dbReference type="dictyBase" id="DDB_G0293848">
    <property type="gene designation" value="phlp3"/>
</dbReference>
<dbReference type="VEuPathDB" id="AmoebaDB:DDB_G0293848"/>
<dbReference type="eggNOG" id="KOG1672">
    <property type="taxonomic scope" value="Eukaryota"/>
</dbReference>
<dbReference type="HOGENOM" id="CLU_072378_0_1_1"/>
<dbReference type="InParanoid" id="Q71A37"/>
<dbReference type="OMA" id="HFFHPEF"/>
<dbReference type="PhylomeDB" id="Q71A37"/>
<dbReference type="PRO" id="PR:Q71A37"/>
<dbReference type="Proteomes" id="UP000002195">
    <property type="component" value="Chromosome 6"/>
</dbReference>
<dbReference type="GO" id="GO:0005737">
    <property type="term" value="C:cytoplasm"/>
    <property type="evidence" value="ECO:0000318"/>
    <property type="project" value="GO_Central"/>
</dbReference>
<dbReference type="CDD" id="cd02989">
    <property type="entry name" value="Phd_like_TxnDC9"/>
    <property type="match status" value="1"/>
</dbReference>
<dbReference type="Gene3D" id="3.40.30.10">
    <property type="entry name" value="Glutaredoxin"/>
    <property type="match status" value="1"/>
</dbReference>
<dbReference type="InterPro" id="IPR036249">
    <property type="entry name" value="Thioredoxin-like_sf"/>
</dbReference>
<dbReference type="InterPro" id="IPR013766">
    <property type="entry name" value="Thioredoxin_domain"/>
</dbReference>
<dbReference type="PANTHER" id="PTHR21148">
    <property type="entry name" value="THIOREDOXIN DOMAIN-CONTAINING PROTEIN 9"/>
    <property type="match status" value="1"/>
</dbReference>
<dbReference type="Pfam" id="PF00085">
    <property type="entry name" value="Thioredoxin"/>
    <property type="match status" value="1"/>
</dbReference>
<dbReference type="SUPFAM" id="SSF52833">
    <property type="entry name" value="Thioredoxin-like"/>
    <property type="match status" value="1"/>
</dbReference>
<keyword id="KW-1185">Reference proteome</keyword>
<gene>
    <name type="primary">phlp3</name>
    <name type="ORF">DDB_G0293848</name>
</gene>
<sequence length="184" mass="21035">MSENNTNNGLDEDFDDDDELAKIREQRMKQLKEESKLKQSFLSTHGELKEIDEQDFLKEVTGTDNVVVHFYHSDFQRCKILDKSLEILAKTHLGTKFLKVNAEKAQFFTGKLGIRILPTLVFFSNGIAVDRCVGFEEFGGIDSFKIEQLAIRISKAGVLDFKHTTGLKIISKQDVKNNKFKEDD</sequence>
<comment type="similarity">
    <text evidence="1">Belongs to the phosducin family.</text>
</comment>
<feature type="chain" id="PRO_0000326489" description="Phosducin-like protein 3">
    <location>
        <begin position="1"/>
        <end position="184"/>
    </location>
</feature>
<feature type="region of interest" description="Thioredoxin fold">
    <location>
        <begin position="45"/>
        <end position="184"/>
    </location>
</feature>
<organism>
    <name type="scientific">Dictyostelium discoideum</name>
    <name type="common">Social amoeba</name>
    <dbReference type="NCBI Taxonomy" id="44689"/>
    <lineage>
        <taxon>Eukaryota</taxon>
        <taxon>Amoebozoa</taxon>
        <taxon>Evosea</taxon>
        <taxon>Eumycetozoa</taxon>
        <taxon>Dictyostelia</taxon>
        <taxon>Dictyosteliales</taxon>
        <taxon>Dictyosteliaceae</taxon>
        <taxon>Dictyostelium</taxon>
    </lineage>
</organism>